<comment type="similarity">
    <text evidence="1">Belongs to the UPF0352 family.</text>
</comment>
<protein>
    <recommendedName>
        <fullName evidence="1">UPF0352 protein YejL</fullName>
    </recommendedName>
</protein>
<name>YEJL_ECOLC</name>
<sequence>MPQISRYSDEQVEQLLAELLNVLEKHKAPTDLSLMVLGNMVTNLINTSIAPAQRQAIANSFARALQSSINEDKAH</sequence>
<feature type="chain" id="PRO_1000083818" description="UPF0352 protein YejL">
    <location>
        <begin position="1"/>
        <end position="75"/>
    </location>
</feature>
<reference key="1">
    <citation type="submission" date="2008-02" db="EMBL/GenBank/DDBJ databases">
        <title>Complete sequence of Escherichia coli C str. ATCC 8739.</title>
        <authorList>
            <person name="Copeland A."/>
            <person name="Lucas S."/>
            <person name="Lapidus A."/>
            <person name="Glavina del Rio T."/>
            <person name="Dalin E."/>
            <person name="Tice H."/>
            <person name="Bruce D."/>
            <person name="Goodwin L."/>
            <person name="Pitluck S."/>
            <person name="Kiss H."/>
            <person name="Brettin T."/>
            <person name="Detter J.C."/>
            <person name="Han C."/>
            <person name="Kuske C.R."/>
            <person name="Schmutz J."/>
            <person name="Larimer F."/>
            <person name="Land M."/>
            <person name="Hauser L."/>
            <person name="Kyrpides N."/>
            <person name="Mikhailova N."/>
            <person name="Ingram L."/>
            <person name="Richardson P."/>
        </authorList>
    </citation>
    <scope>NUCLEOTIDE SEQUENCE [LARGE SCALE GENOMIC DNA]</scope>
    <source>
        <strain>ATCC 8739 / DSM 1576 / NBRC 3972 / NCIMB 8545 / WDCM 00012 / Crooks</strain>
    </source>
</reference>
<dbReference type="EMBL" id="CP000946">
    <property type="protein sequence ID" value="ACA77123.1"/>
    <property type="molecule type" value="Genomic_DNA"/>
</dbReference>
<dbReference type="RefSeq" id="WP_001135667.1">
    <property type="nucleotide sequence ID" value="NZ_MTFT01000031.1"/>
</dbReference>
<dbReference type="BMRB" id="B1IY82"/>
<dbReference type="SMR" id="B1IY82"/>
<dbReference type="KEGG" id="ecl:EcolC_1460"/>
<dbReference type="HOGENOM" id="CLU_175457_0_0_6"/>
<dbReference type="FunFam" id="1.10.3390.10:FF:000001">
    <property type="entry name" value="UPF0352 protein YejL"/>
    <property type="match status" value="1"/>
</dbReference>
<dbReference type="Gene3D" id="1.10.3390.10">
    <property type="entry name" value="YejL-like"/>
    <property type="match status" value="1"/>
</dbReference>
<dbReference type="HAMAP" id="MF_00816">
    <property type="entry name" value="UPF0352"/>
    <property type="match status" value="1"/>
</dbReference>
<dbReference type="InterPro" id="IPR009857">
    <property type="entry name" value="UPF0352"/>
</dbReference>
<dbReference type="InterPro" id="IPR023202">
    <property type="entry name" value="YejL_sf"/>
</dbReference>
<dbReference type="NCBIfam" id="NF010242">
    <property type="entry name" value="PRK13689.1"/>
    <property type="match status" value="1"/>
</dbReference>
<dbReference type="Pfam" id="PF07208">
    <property type="entry name" value="DUF1414"/>
    <property type="match status" value="1"/>
</dbReference>
<dbReference type="PIRSF" id="PIRSF006188">
    <property type="entry name" value="UCP006188"/>
    <property type="match status" value="1"/>
</dbReference>
<dbReference type="SUPFAM" id="SSF158651">
    <property type="entry name" value="YejL-like"/>
    <property type="match status" value="1"/>
</dbReference>
<proteinExistence type="inferred from homology"/>
<organism>
    <name type="scientific">Escherichia coli (strain ATCC 8739 / DSM 1576 / NBRC 3972 / NCIMB 8545 / WDCM 00012 / Crooks)</name>
    <dbReference type="NCBI Taxonomy" id="481805"/>
    <lineage>
        <taxon>Bacteria</taxon>
        <taxon>Pseudomonadati</taxon>
        <taxon>Pseudomonadota</taxon>
        <taxon>Gammaproteobacteria</taxon>
        <taxon>Enterobacterales</taxon>
        <taxon>Enterobacteriaceae</taxon>
        <taxon>Escherichia</taxon>
    </lineage>
</organism>
<gene>
    <name evidence="1" type="primary">yejL</name>
    <name type="ordered locus">EcolC_1460</name>
</gene>
<evidence type="ECO:0000255" key="1">
    <source>
        <dbReference type="HAMAP-Rule" id="MF_00816"/>
    </source>
</evidence>
<accession>B1IY82</accession>